<comment type="similarity">
    <text evidence="1">Belongs to the bacterial ribosomal protein bL33 family.</text>
</comment>
<dbReference type="EMBL" id="CP000453">
    <property type="protein sequence ID" value="ABI57982.1"/>
    <property type="molecule type" value="Genomic_DNA"/>
</dbReference>
<dbReference type="RefSeq" id="WP_011630375.1">
    <property type="nucleotide sequence ID" value="NC_008340.1"/>
</dbReference>
<dbReference type="SMR" id="Q0A5A5"/>
<dbReference type="KEGG" id="aeh:Mlg_2642"/>
<dbReference type="eggNOG" id="COG0267">
    <property type="taxonomic scope" value="Bacteria"/>
</dbReference>
<dbReference type="HOGENOM" id="CLU_190949_1_1_6"/>
<dbReference type="OrthoDB" id="21586at2"/>
<dbReference type="Proteomes" id="UP000001962">
    <property type="component" value="Chromosome"/>
</dbReference>
<dbReference type="GO" id="GO:0022625">
    <property type="term" value="C:cytosolic large ribosomal subunit"/>
    <property type="evidence" value="ECO:0007669"/>
    <property type="project" value="TreeGrafter"/>
</dbReference>
<dbReference type="GO" id="GO:0003735">
    <property type="term" value="F:structural constituent of ribosome"/>
    <property type="evidence" value="ECO:0007669"/>
    <property type="project" value="InterPro"/>
</dbReference>
<dbReference type="GO" id="GO:0006412">
    <property type="term" value="P:translation"/>
    <property type="evidence" value="ECO:0007669"/>
    <property type="project" value="UniProtKB-UniRule"/>
</dbReference>
<dbReference type="FunFam" id="2.20.28.120:FF:000001">
    <property type="entry name" value="50S ribosomal protein L33"/>
    <property type="match status" value="1"/>
</dbReference>
<dbReference type="Gene3D" id="2.20.28.120">
    <property type="entry name" value="Ribosomal protein L33"/>
    <property type="match status" value="1"/>
</dbReference>
<dbReference type="HAMAP" id="MF_00294">
    <property type="entry name" value="Ribosomal_bL33"/>
    <property type="match status" value="1"/>
</dbReference>
<dbReference type="InterPro" id="IPR001705">
    <property type="entry name" value="Ribosomal_bL33"/>
</dbReference>
<dbReference type="InterPro" id="IPR018264">
    <property type="entry name" value="Ribosomal_bL33_CS"/>
</dbReference>
<dbReference type="InterPro" id="IPR038584">
    <property type="entry name" value="Ribosomal_bL33_sf"/>
</dbReference>
<dbReference type="InterPro" id="IPR011332">
    <property type="entry name" value="Ribosomal_zn-bd"/>
</dbReference>
<dbReference type="NCBIfam" id="NF001860">
    <property type="entry name" value="PRK00595.1"/>
    <property type="match status" value="1"/>
</dbReference>
<dbReference type="NCBIfam" id="TIGR01023">
    <property type="entry name" value="rpmG_bact"/>
    <property type="match status" value="1"/>
</dbReference>
<dbReference type="PANTHER" id="PTHR15238">
    <property type="entry name" value="54S RIBOSOMAL PROTEIN L39, MITOCHONDRIAL"/>
    <property type="match status" value="1"/>
</dbReference>
<dbReference type="PANTHER" id="PTHR15238:SF1">
    <property type="entry name" value="LARGE RIBOSOMAL SUBUNIT PROTEIN BL33M"/>
    <property type="match status" value="1"/>
</dbReference>
<dbReference type="Pfam" id="PF00471">
    <property type="entry name" value="Ribosomal_L33"/>
    <property type="match status" value="1"/>
</dbReference>
<dbReference type="SUPFAM" id="SSF57829">
    <property type="entry name" value="Zn-binding ribosomal proteins"/>
    <property type="match status" value="1"/>
</dbReference>
<dbReference type="PROSITE" id="PS00582">
    <property type="entry name" value="RIBOSOMAL_L33"/>
    <property type="match status" value="1"/>
</dbReference>
<name>RL33_ALKEH</name>
<gene>
    <name evidence="1" type="primary">rpmG</name>
    <name type="ordered locus">Mlg_2642</name>
</gene>
<protein>
    <recommendedName>
        <fullName evidence="1">Large ribosomal subunit protein bL33</fullName>
    </recommendedName>
    <alternativeName>
        <fullName evidence="2">50S ribosomal protein L33</fullName>
    </alternativeName>
</protein>
<evidence type="ECO:0000255" key="1">
    <source>
        <dbReference type="HAMAP-Rule" id="MF_00294"/>
    </source>
</evidence>
<evidence type="ECO:0000305" key="2"/>
<feature type="chain" id="PRO_0000356368" description="Large ribosomal subunit protein bL33">
    <location>
        <begin position="1"/>
        <end position="51"/>
    </location>
</feature>
<accession>Q0A5A5</accession>
<keyword id="KW-1185">Reference proteome</keyword>
<keyword id="KW-0687">Ribonucleoprotein</keyword>
<keyword id="KW-0689">Ribosomal protein</keyword>
<sequence length="51" mass="6132">MRDKIKLVSTAGTGHYYTTDKNKRNTPHKLEFRKYDPVVRKHVLYREAKIK</sequence>
<proteinExistence type="inferred from homology"/>
<reference key="1">
    <citation type="submission" date="2006-08" db="EMBL/GenBank/DDBJ databases">
        <title>Complete sequence of Alkalilimnicola ehrilichei MLHE-1.</title>
        <authorList>
            <person name="Copeland A."/>
            <person name="Lucas S."/>
            <person name="Lapidus A."/>
            <person name="Barry K."/>
            <person name="Detter J.C."/>
            <person name="Glavina del Rio T."/>
            <person name="Hammon N."/>
            <person name="Israni S."/>
            <person name="Dalin E."/>
            <person name="Tice H."/>
            <person name="Pitluck S."/>
            <person name="Sims D."/>
            <person name="Brettin T."/>
            <person name="Bruce D."/>
            <person name="Han C."/>
            <person name="Tapia R."/>
            <person name="Gilna P."/>
            <person name="Schmutz J."/>
            <person name="Larimer F."/>
            <person name="Land M."/>
            <person name="Hauser L."/>
            <person name="Kyrpides N."/>
            <person name="Mikhailova N."/>
            <person name="Oremland R.S."/>
            <person name="Hoeft S.E."/>
            <person name="Switzer-Blum J."/>
            <person name="Kulp T."/>
            <person name="King G."/>
            <person name="Tabita R."/>
            <person name="Witte B."/>
            <person name="Santini J.M."/>
            <person name="Basu P."/>
            <person name="Hollibaugh J.T."/>
            <person name="Xie G."/>
            <person name="Stolz J.F."/>
            <person name="Richardson P."/>
        </authorList>
    </citation>
    <scope>NUCLEOTIDE SEQUENCE [LARGE SCALE GENOMIC DNA]</scope>
    <source>
        <strain>ATCC BAA-1101 / DSM 17681 / MLHE-1</strain>
    </source>
</reference>
<organism>
    <name type="scientific">Alkalilimnicola ehrlichii (strain ATCC BAA-1101 / DSM 17681 / MLHE-1)</name>
    <dbReference type="NCBI Taxonomy" id="187272"/>
    <lineage>
        <taxon>Bacteria</taxon>
        <taxon>Pseudomonadati</taxon>
        <taxon>Pseudomonadota</taxon>
        <taxon>Gammaproteobacteria</taxon>
        <taxon>Chromatiales</taxon>
        <taxon>Ectothiorhodospiraceae</taxon>
        <taxon>Alkalilimnicola</taxon>
    </lineage>
</organism>